<accession>A9IR81</accession>
<keyword id="KW-0028">Amino-acid biosynthesis</keyword>
<keyword id="KW-0170">Cobalt</keyword>
<keyword id="KW-0220">Diaminopimelate biosynthesis</keyword>
<keyword id="KW-0378">Hydrolase</keyword>
<keyword id="KW-0457">Lysine biosynthesis</keyword>
<keyword id="KW-0479">Metal-binding</keyword>
<keyword id="KW-0862">Zinc</keyword>
<protein>
    <recommendedName>
        <fullName evidence="1">Succinyl-diaminopimelate desuccinylase</fullName>
        <shortName evidence="1">SDAP desuccinylase</shortName>
        <ecNumber evidence="1">3.5.1.18</ecNumber>
    </recommendedName>
    <alternativeName>
        <fullName evidence="1">N-succinyl-LL-2,6-diaminoheptanedioate amidohydrolase</fullName>
    </alternativeName>
</protein>
<dbReference type="EC" id="3.5.1.18" evidence="1"/>
<dbReference type="EMBL" id="AM902716">
    <property type="protein sequence ID" value="CAP43142.1"/>
    <property type="molecule type" value="Genomic_DNA"/>
</dbReference>
<dbReference type="SMR" id="A9IR81"/>
<dbReference type="STRING" id="94624.Bpet2800"/>
<dbReference type="KEGG" id="bpt:Bpet2800"/>
<dbReference type="eggNOG" id="COG0624">
    <property type="taxonomic scope" value="Bacteria"/>
</dbReference>
<dbReference type="UniPathway" id="UPA00034">
    <property type="reaction ID" value="UER00021"/>
</dbReference>
<dbReference type="Proteomes" id="UP000001225">
    <property type="component" value="Chromosome"/>
</dbReference>
<dbReference type="GO" id="GO:0008777">
    <property type="term" value="F:acetylornithine deacetylase activity"/>
    <property type="evidence" value="ECO:0007669"/>
    <property type="project" value="TreeGrafter"/>
</dbReference>
<dbReference type="GO" id="GO:0050897">
    <property type="term" value="F:cobalt ion binding"/>
    <property type="evidence" value="ECO:0007669"/>
    <property type="project" value="UniProtKB-UniRule"/>
</dbReference>
<dbReference type="GO" id="GO:0009014">
    <property type="term" value="F:succinyl-diaminopimelate desuccinylase activity"/>
    <property type="evidence" value="ECO:0007669"/>
    <property type="project" value="UniProtKB-UniRule"/>
</dbReference>
<dbReference type="GO" id="GO:0008270">
    <property type="term" value="F:zinc ion binding"/>
    <property type="evidence" value="ECO:0007669"/>
    <property type="project" value="UniProtKB-UniRule"/>
</dbReference>
<dbReference type="GO" id="GO:0019877">
    <property type="term" value="P:diaminopimelate biosynthetic process"/>
    <property type="evidence" value="ECO:0007669"/>
    <property type="project" value="UniProtKB-UniRule"/>
</dbReference>
<dbReference type="GO" id="GO:0006526">
    <property type="term" value="P:L-arginine biosynthetic process"/>
    <property type="evidence" value="ECO:0007669"/>
    <property type="project" value="TreeGrafter"/>
</dbReference>
<dbReference type="GO" id="GO:0009089">
    <property type="term" value="P:lysine biosynthetic process via diaminopimelate"/>
    <property type="evidence" value="ECO:0007669"/>
    <property type="project" value="UniProtKB-UniRule"/>
</dbReference>
<dbReference type="CDD" id="cd03891">
    <property type="entry name" value="M20_DapE_proteobac"/>
    <property type="match status" value="1"/>
</dbReference>
<dbReference type="FunFam" id="3.30.70.360:FF:000011">
    <property type="entry name" value="Succinyl-diaminopimelate desuccinylase"/>
    <property type="match status" value="1"/>
</dbReference>
<dbReference type="FunFam" id="3.40.630.10:FF:000005">
    <property type="entry name" value="Succinyl-diaminopimelate desuccinylase"/>
    <property type="match status" value="1"/>
</dbReference>
<dbReference type="Gene3D" id="1.10.150.900">
    <property type="match status" value="1"/>
</dbReference>
<dbReference type="Gene3D" id="3.30.70.360">
    <property type="match status" value="1"/>
</dbReference>
<dbReference type="Gene3D" id="3.40.630.10">
    <property type="entry name" value="Zn peptidases"/>
    <property type="match status" value="1"/>
</dbReference>
<dbReference type="HAMAP" id="MF_01690">
    <property type="entry name" value="DapE"/>
    <property type="match status" value="1"/>
</dbReference>
<dbReference type="InterPro" id="IPR036264">
    <property type="entry name" value="Bact_exopeptidase_dim_dom"/>
</dbReference>
<dbReference type="InterPro" id="IPR005941">
    <property type="entry name" value="DapE_proteobac"/>
</dbReference>
<dbReference type="InterPro" id="IPR002933">
    <property type="entry name" value="Peptidase_M20"/>
</dbReference>
<dbReference type="InterPro" id="IPR011650">
    <property type="entry name" value="Peptidase_M20_dimer"/>
</dbReference>
<dbReference type="InterPro" id="IPR050072">
    <property type="entry name" value="Peptidase_M20A"/>
</dbReference>
<dbReference type="NCBIfam" id="TIGR01246">
    <property type="entry name" value="dapE_proteo"/>
    <property type="match status" value="1"/>
</dbReference>
<dbReference type="NCBIfam" id="NF009557">
    <property type="entry name" value="PRK13009.1"/>
    <property type="match status" value="1"/>
</dbReference>
<dbReference type="PANTHER" id="PTHR43808">
    <property type="entry name" value="ACETYLORNITHINE DEACETYLASE"/>
    <property type="match status" value="1"/>
</dbReference>
<dbReference type="PANTHER" id="PTHR43808:SF31">
    <property type="entry name" value="N-ACETYL-L-CITRULLINE DEACETYLASE"/>
    <property type="match status" value="1"/>
</dbReference>
<dbReference type="Pfam" id="PF07687">
    <property type="entry name" value="M20_dimer"/>
    <property type="match status" value="1"/>
</dbReference>
<dbReference type="Pfam" id="PF01546">
    <property type="entry name" value="Peptidase_M20"/>
    <property type="match status" value="1"/>
</dbReference>
<dbReference type="SUPFAM" id="SSF55031">
    <property type="entry name" value="Bacterial exopeptidase dimerisation domain"/>
    <property type="match status" value="1"/>
</dbReference>
<dbReference type="SUPFAM" id="SSF53187">
    <property type="entry name" value="Zn-dependent exopeptidases"/>
    <property type="match status" value="1"/>
</dbReference>
<dbReference type="PROSITE" id="PS00759">
    <property type="entry name" value="ARGE_DAPE_CPG2_2"/>
    <property type="match status" value="1"/>
</dbReference>
<comment type="function">
    <text evidence="1">Catalyzes the hydrolysis of N-succinyl-L,L-diaminopimelic acid (SDAP), forming succinate and LL-2,6-diaminopimelate (DAP), an intermediate involved in the bacterial biosynthesis of lysine and meso-diaminopimelic acid, an essential component of bacterial cell walls.</text>
</comment>
<comment type="catalytic activity">
    <reaction evidence="1">
        <text>N-succinyl-(2S,6S)-2,6-diaminopimelate + H2O = (2S,6S)-2,6-diaminopimelate + succinate</text>
        <dbReference type="Rhea" id="RHEA:22608"/>
        <dbReference type="ChEBI" id="CHEBI:15377"/>
        <dbReference type="ChEBI" id="CHEBI:30031"/>
        <dbReference type="ChEBI" id="CHEBI:57609"/>
        <dbReference type="ChEBI" id="CHEBI:58087"/>
        <dbReference type="EC" id="3.5.1.18"/>
    </reaction>
</comment>
<comment type="cofactor">
    <cofactor evidence="1">
        <name>Zn(2+)</name>
        <dbReference type="ChEBI" id="CHEBI:29105"/>
    </cofactor>
    <cofactor evidence="1">
        <name>Co(2+)</name>
        <dbReference type="ChEBI" id="CHEBI:48828"/>
    </cofactor>
    <text evidence="1">Binds 2 Zn(2+) or Co(2+) ions per subunit.</text>
</comment>
<comment type="pathway">
    <text evidence="1">Amino-acid biosynthesis; L-lysine biosynthesis via DAP pathway; LL-2,6-diaminopimelate from (S)-tetrahydrodipicolinate (succinylase route): step 3/3.</text>
</comment>
<comment type="subunit">
    <text evidence="1">Homodimer.</text>
</comment>
<comment type="similarity">
    <text evidence="1">Belongs to the peptidase M20A family. DapE subfamily.</text>
</comment>
<feature type="chain" id="PRO_0000375480" description="Succinyl-diaminopimelate desuccinylase">
    <location>
        <begin position="1"/>
        <end position="380"/>
    </location>
</feature>
<feature type="active site" evidence="1">
    <location>
        <position position="71"/>
    </location>
</feature>
<feature type="active site" description="Proton acceptor" evidence="1">
    <location>
        <position position="136"/>
    </location>
</feature>
<feature type="binding site" evidence="1">
    <location>
        <position position="69"/>
    </location>
    <ligand>
        <name>Zn(2+)</name>
        <dbReference type="ChEBI" id="CHEBI:29105"/>
        <label>1</label>
    </ligand>
</feature>
<feature type="binding site" evidence="1">
    <location>
        <position position="102"/>
    </location>
    <ligand>
        <name>Zn(2+)</name>
        <dbReference type="ChEBI" id="CHEBI:29105"/>
        <label>1</label>
    </ligand>
</feature>
<feature type="binding site" evidence="1">
    <location>
        <position position="102"/>
    </location>
    <ligand>
        <name>Zn(2+)</name>
        <dbReference type="ChEBI" id="CHEBI:29105"/>
        <label>2</label>
    </ligand>
</feature>
<feature type="binding site" evidence="1">
    <location>
        <position position="137"/>
    </location>
    <ligand>
        <name>Zn(2+)</name>
        <dbReference type="ChEBI" id="CHEBI:29105"/>
        <label>2</label>
    </ligand>
</feature>
<feature type="binding site" evidence="1">
    <location>
        <position position="165"/>
    </location>
    <ligand>
        <name>Zn(2+)</name>
        <dbReference type="ChEBI" id="CHEBI:29105"/>
        <label>1</label>
    </ligand>
</feature>
<feature type="binding site" evidence="1">
    <location>
        <position position="351"/>
    </location>
    <ligand>
        <name>Zn(2+)</name>
        <dbReference type="ChEBI" id="CHEBI:29105"/>
        <label>2</label>
    </ligand>
</feature>
<proteinExistence type="inferred from homology"/>
<reference key="1">
    <citation type="journal article" date="2008" name="BMC Genomics">
        <title>The missing link: Bordetella petrii is endowed with both the metabolic versatility of environmental bacteria and virulence traits of pathogenic Bordetellae.</title>
        <authorList>
            <person name="Gross R."/>
            <person name="Guzman C.A."/>
            <person name="Sebaihia M."/>
            <person name="Martin dos Santos V.A.P."/>
            <person name="Pieper D.H."/>
            <person name="Koebnik R."/>
            <person name="Lechner M."/>
            <person name="Bartels D."/>
            <person name="Buhrmester J."/>
            <person name="Choudhuri J.V."/>
            <person name="Ebensen T."/>
            <person name="Gaigalat L."/>
            <person name="Herrmann S."/>
            <person name="Khachane A.N."/>
            <person name="Larisch C."/>
            <person name="Link S."/>
            <person name="Linke B."/>
            <person name="Meyer F."/>
            <person name="Mormann S."/>
            <person name="Nakunst D."/>
            <person name="Rueckert C."/>
            <person name="Schneiker-Bekel S."/>
            <person name="Schulze K."/>
            <person name="Voerholter F.-J."/>
            <person name="Yevsa T."/>
            <person name="Engle J.T."/>
            <person name="Goldman W.E."/>
            <person name="Puehler A."/>
            <person name="Goebel U.B."/>
            <person name="Goesmann A."/>
            <person name="Bloecker H."/>
            <person name="Kaiser O."/>
            <person name="Martinez-Arias R."/>
        </authorList>
    </citation>
    <scope>NUCLEOTIDE SEQUENCE [LARGE SCALE GENOMIC DNA]</scope>
    <source>
        <strain>ATCC BAA-461 / DSM 12804 / CCUG 43448</strain>
    </source>
</reference>
<organism>
    <name type="scientific">Bordetella petrii (strain ATCC BAA-461 / DSM 12804 / CCUG 43448)</name>
    <dbReference type="NCBI Taxonomy" id="340100"/>
    <lineage>
        <taxon>Bacteria</taxon>
        <taxon>Pseudomonadati</taxon>
        <taxon>Pseudomonadota</taxon>
        <taxon>Betaproteobacteria</taxon>
        <taxon>Burkholderiales</taxon>
        <taxon>Alcaligenaceae</taxon>
        <taxon>Bordetella</taxon>
    </lineage>
</organism>
<evidence type="ECO:0000255" key="1">
    <source>
        <dbReference type="HAMAP-Rule" id="MF_01690"/>
    </source>
</evidence>
<name>DAPE_BORPD</name>
<sequence length="380" mass="40862">MTADSAVLALVRELIARPSVTPDDVDCQLLLAQRLEHAGFRCETIARGDVTNLWARRGNAGPLVVFAGHTDVVPPGPRDKWDSDPFVPTERDGYLYGRGAADMKSSIAAFVVAAEEFTAAHPGHDGSIALLLTSDEEGPAVDGTVIVCDELRARGEQPDYCIVGEPTSGDVLGDTCKNGRRGSLSGRLTVKGIQGHVAYPHLARNPVHQLAPALAEMAATEWDRGNEYFPPTTFQVSNLRAGTGATNVVPGEAVVLFNFRFSTASTPEGLKQRVHALLDKHGLEYELDWELGGEPFLTPRGPLTDALVAAIRAETGVAAELSTTGGTSDGRFIAKICPQVIEFGPCNATIHKVNERIELASLEPLKNIYRRTLENLLLPR</sequence>
<gene>
    <name evidence="1" type="primary">dapE</name>
    <name type="ordered locus">Bpet2800</name>
</gene>